<feature type="chain" id="PRO_0000253741" description="Ras-related protein Rab-15">
    <location>
        <begin position="1"/>
        <end position="212"/>
    </location>
</feature>
<feature type="region of interest" description="Disordered" evidence="6">
    <location>
        <begin position="192"/>
        <end position="212"/>
    </location>
</feature>
<feature type="short sequence motif" description="Switch 1" evidence="5">
    <location>
        <begin position="31"/>
        <end position="45"/>
    </location>
</feature>
<feature type="short sequence motif" description="Switch 2" evidence="5">
    <location>
        <begin position="63"/>
        <end position="80"/>
    </location>
</feature>
<feature type="binding site" evidence="4">
    <location>
        <position position="17"/>
    </location>
    <ligand>
        <name>GTP</name>
        <dbReference type="ChEBI" id="CHEBI:37565"/>
    </ligand>
</feature>
<feature type="binding site" evidence="4">
    <location>
        <position position="18"/>
    </location>
    <ligand>
        <name>GTP</name>
        <dbReference type="ChEBI" id="CHEBI:37565"/>
    </ligand>
</feature>
<feature type="binding site" evidence="4">
    <location>
        <position position="19"/>
    </location>
    <ligand>
        <name>GTP</name>
        <dbReference type="ChEBI" id="CHEBI:37565"/>
    </ligand>
</feature>
<feature type="binding site" evidence="4">
    <location>
        <position position="20"/>
    </location>
    <ligand>
        <name>GTP</name>
        <dbReference type="ChEBI" id="CHEBI:37565"/>
    </ligand>
</feature>
<feature type="binding site" evidence="4">
    <location>
        <position position="21"/>
    </location>
    <ligand>
        <name>GTP</name>
        <dbReference type="ChEBI" id="CHEBI:37565"/>
    </ligand>
</feature>
<feature type="binding site" evidence="4">
    <location>
        <position position="22"/>
    </location>
    <ligand>
        <name>GTP</name>
        <dbReference type="ChEBI" id="CHEBI:37565"/>
    </ligand>
</feature>
<feature type="binding site" evidence="4">
    <location>
        <position position="22"/>
    </location>
    <ligand>
        <name>Mg(2+)</name>
        <dbReference type="ChEBI" id="CHEBI:18420"/>
    </ligand>
</feature>
<feature type="binding site" evidence="4">
    <location>
        <position position="23"/>
    </location>
    <ligand>
        <name>GTP</name>
        <dbReference type="ChEBI" id="CHEBI:37565"/>
    </ligand>
</feature>
<feature type="binding site" evidence="4">
    <location>
        <position position="35"/>
    </location>
    <ligand>
        <name>GTP</name>
        <dbReference type="ChEBI" id="CHEBI:37565"/>
    </ligand>
</feature>
<feature type="binding site" evidence="4">
    <location>
        <position position="39"/>
    </location>
    <ligand>
        <name>GTP</name>
        <dbReference type="ChEBI" id="CHEBI:37565"/>
    </ligand>
</feature>
<feature type="binding site" evidence="4">
    <location>
        <position position="40"/>
    </location>
    <ligand>
        <name>GTP</name>
        <dbReference type="ChEBI" id="CHEBI:37565"/>
    </ligand>
</feature>
<feature type="binding site" evidence="4">
    <location>
        <position position="40"/>
    </location>
    <ligand>
        <name>Mg(2+)</name>
        <dbReference type="ChEBI" id="CHEBI:18420"/>
    </ligand>
</feature>
<feature type="binding site" evidence="4">
    <location>
        <position position="63"/>
    </location>
    <ligand>
        <name>Mg(2+)</name>
        <dbReference type="ChEBI" id="CHEBI:18420"/>
    </ligand>
</feature>
<feature type="binding site" evidence="4">
    <location>
        <position position="66"/>
    </location>
    <ligand>
        <name>GTP</name>
        <dbReference type="ChEBI" id="CHEBI:37565"/>
    </ligand>
</feature>
<feature type="binding site" evidence="4">
    <location>
        <position position="121"/>
    </location>
    <ligand>
        <name>GTP</name>
        <dbReference type="ChEBI" id="CHEBI:37565"/>
    </ligand>
</feature>
<feature type="binding site" evidence="4">
    <location>
        <position position="122"/>
    </location>
    <ligand>
        <name>GTP</name>
        <dbReference type="ChEBI" id="CHEBI:37565"/>
    </ligand>
</feature>
<feature type="binding site" evidence="4">
    <location>
        <position position="124"/>
    </location>
    <ligand>
        <name>GTP</name>
        <dbReference type="ChEBI" id="CHEBI:37565"/>
    </ligand>
</feature>
<feature type="binding site" evidence="4">
    <location>
        <position position="151"/>
    </location>
    <ligand>
        <name>GTP</name>
        <dbReference type="ChEBI" id="CHEBI:37565"/>
    </ligand>
</feature>
<feature type="binding site" evidence="4">
    <location>
        <position position="152"/>
    </location>
    <ligand>
        <name>GTP</name>
        <dbReference type="ChEBI" id="CHEBI:37565"/>
    </ligand>
</feature>
<feature type="modified residue" description="Cysteine methyl ester" evidence="1">
    <location>
        <position position="212"/>
    </location>
</feature>
<feature type="lipid moiety-binding region" description="S-geranylgeranyl cysteine" evidence="1">
    <location>
        <position position="210"/>
    </location>
</feature>
<feature type="lipid moiety-binding region" description="S-geranylgeranyl cysteine" evidence="1">
    <location>
        <position position="212"/>
    </location>
</feature>
<reference key="1">
    <citation type="submission" date="2006-04" db="EMBL/GenBank/DDBJ databases">
        <authorList>
            <consortium name="NIH - Mammalian Gene Collection (MGC) project"/>
        </authorList>
    </citation>
    <scope>NUCLEOTIDE SEQUENCE [LARGE SCALE MRNA]</scope>
    <source>
        <strain>Hereford</strain>
        <tissue>Uterus</tissue>
    </source>
</reference>
<name>RAB15_BOVIN</name>
<gene>
    <name type="primary">RAB15</name>
</gene>
<protein>
    <recommendedName>
        <fullName>Ras-related protein Rab-15</fullName>
        <ecNumber evidence="4">3.6.5.2</ecNumber>
    </recommendedName>
</protein>
<organism>
    <name type="scientific">Bos taurus</name>
    <name type="common">Bovine</name>
    <dbReference type="NCBI Taxonomy" id="9913"/>
    <lineage>
        <taxon>Eukaryota</taxon>
        <taxon>Metazoa</taxon>
        <taxon>Chordata</taxon>
        <taxon>Craniata</taxon>
        <taxon>Vertebrata</taxon>
        <taxon>Euteleostomi</taxon>
        <taxon>Mammalia</taxon>
        <taxon>Eutheria</taxon>
        <taxon>Laurasiatheria</taxon>
        <taxon>Artiodactyla</taxon>
        <taxon>Ruminantia</taxon>
        <taxon>Pecora</taxon>
        <taxon>Bovidae</taxon>
        <taxon>Bovinae</taxon>
        <taxon>Bos</taxon>
    </lineage>
</organism>
<evidence type="ECO:0000250" key="1"/>
<evidence type="ECO:0000250" key="2">
    <source>
        <dbReference type="UniProtKB" id="P35289"/>
    </source>
</evidence>
<evidence type="ECO:0000250" key="3">
    <source>
        <dbReference type="UniProtKB" id="P59190"/>
    </source>
</evidence>
<evidence type="ECO:0000250" key="4">
    <source>
        <dbReference type="UniProtKB" id="P61026"/>
    </source>
</evidence>
<evidence type="ECO:0000250" key="5">
    <source>
        <dbReference type="UniProtKB" id="P62820"/>
    </source>
</evidence>
<evidence type="ECO:0000256" key="6">
    <source>
        <dbReference type="SAM" id="MobiDB-lite"/>
    </source>
</evidence>
<evidence type="ECO:0000305" key="7"/>
<proteinExistence type="evidence at transcript level"/>
<sequence>MAKQYDVLFRLLLIGDSGVGKTCLLCRFTDNEFHSSHISTIGVDFKMKTIEVDGIKVRIQIWDTAGQERYQTITKQYYRRAQGIFLVYDISSERSYQHIMKWVSDVDEYAPEGVQKILIGNKADEEQKRQVGREQGQQLAREYGMDFYETSACTNLNIKESFTRLTELVLQAHRKELEGLRTRANHELALAELEEDEGKPEGPANSSKTCWC</sequence>
<dbReference type="EC" id="3.6.5.2" evidence="4"/>
<dbReference type="EMBL" id="BC114760">
    <property type="protein sequence ID" value="AAI14761.1"/>
    <property type="molecule type" value="mRNA"/>
</dbReference>
<dbReference type="RefSeq" id="NP_001040003.1">
    <property type="nucleotide sequence ID" value="NM_001046538.1"/>
</dbReference>
<dbReference type="SMR" id="Q1RMR4"/>
<dbReference type="FunCoup" id="Q1RMR4">
    <property type="interactions" value="191"/>
</dbReference>
<dbReference type="STRING" id="9913.ENSBTAP00000035638"/>
<dbReference type="PaxDb" id="9913-ENSBTAP00000035638"/>
<dbReference type="Ensembl" id="ENSBTAT00000035769.6">
    <property type="protein sequence ID" value="ENSBTAP00000035638.4"/>
    <property type="gene ID" value="ENSBTAG00000003474.7"/>
</dbReference>
<dbReference type="GeneID" id="614507"/>
<dbReference type="KEGG" id="bta:614507"/>
<dbReference type="CTD" id="376267"/>
<dbReference type="VEuPathDB" id="HostDB:ENSBTAG00000003474"/>
<dbReference type="VGNC" id="VGNC:33623">
    <property type="gene designation" value="RAB15"/>
</dbReference>
<dbReference type="eggNOG" id="KOG0078">
    <property type="taxonomic scope" value="Eukaryota"/>
</dbReference>
<dbReference type="GeneTree" id="ENSGT00940000157848"/>
<dbReference type="HOGENOM" id="CLU_041217_23_1_1"/>
<dbReference type="InParanoid" id="Q1RMR4"/>
<dbReference type="OMA" id="SSKNCWC"/>
<dbReference type="OrthoDB" id="9989112at2759"/>
<dbReference type="TreeFam" id="TF314097"/>
<dbReference type="Reactome" id="R-BTA-8873719">
    <property type="pathway name" value="RAB geranylgeranylation"/>
</dbReference>
<dbReference type="Proteomes" id="UP000009136">
    <property type="component" value="Chromosome 10"/>
</dbReference>
<dbReference type="Bgee" id="ENSBTAG00000003474">
    <property type="expression patterns" value="Expressed in corpus epididymis and 96 other cell types or tissues"/>
</dbReference>
<dbReference type="GO" id="GO:0010008">
    <property type="term" value="C:endosome membrane"/>
    <property type="evidence" value="ECO:0000318"/>
    <property type="project" value="GO_Central"/>
</dbReference>
<dbReference type="GO" id="GO:0005886">
    <property type="term" value="C:plasma membrane"/>
    <property type="evidence" value="ECO:0007669"/>
    <property type="project" value="UniProtKB-SubCell"/>
</dbReference>
<dbReference type="GO" id="GO:0005525">
    <property type="term" value="F:GTP binding"/>
    <property type="evidence" value="ECO:0007669"/>
    <property type="project" value="UniProtKB-KW"/>
</dbReference>
<dbReference type="GO" id="GO:0003924">
    <property type="term" value="F:GTPase activity"/>
    <property type="evidence" value="ECO:0007669"/>
    <property type="project" value="InterPro"/>
</dbReference>
<dbReference type="GO" id="GO:0006887">
    <property type="term" value="P:exocytosis"/>
    <property type="evidence" value="ECO:0000318"/>
    <property type="project" value="GO_Central"/>
</dbReference>
<dbReference type="GO" id="GO:0015031">
    <property type="term" value="P:protein transport"/>
    <property type="evidence" value="ECO:0007669"/>
    <property type="project" value="UniProtKB-KW"/>
</dbReference>
<dbReference type="GO" id="GO:0032482">
    <property type="term" value="P:Rab protein signal transduction"/>
    <property type="evidence" value="ECO:0007669"/>
    <property type="project" value="InterPro"/>
</dbReference>
<dbReference type="CDD" id="cd04117">
    <property type="entry name" value="Rab15"/>
    <property type="match status" value="1"/>
</dbReference>
<dbReference type="FunFam" id="3.40.50.300:FF:000990">
    <property type="entry name" value="ras-related protein Rab-15 isoform X1"/>
    <property type="match status" value="1"/>
</dbReference>
<dbReference type="Gene3D" id="3.40.50.300">
    <property type="entry name" value="P-loop containing nucleotide triphosphate hydrolases"/>
    <property type="match status" value="1"/>
</dbReference>
<dbReference type="InterPro" id="IPR027417">
    <property type="entry name" value="P-loop_NTPase"/>
</dbReference>
<dbReference type="InterPro" id="IPR041826">
    <property type="entry name" value="Rab15"/>
</dbReference>
<dbReference type="InterPro" id="IPR005225">
    <property type="entry name" value="Small_GTP-bd"/>
</dbReference>
<dbReference type="InterPro" id="IPR001806">
    <property type="entry name" value="Small_GTPase"/>
</dbReference>
<dbReference type="InterPro" id="IPR050305">
    <property type="entry name" value="Small_GTPase_Rab"/>
</dbReference>
<dbReference type="NCBIfam" id="TIGR00231">
    <property type="entry name" value="small_GTP"/>
    <property type="match status" value="1"/>
</dbReference>
<dbReference type="PANTHER" id="PTHR47980">
    <property type="entry name" value="LD44762P"/>
    <property type="match status" value="1"/>
</dbReference>
<dbReference type="Pfam" id="PF00071">
    <property type="entry name" value="Ras"/>
    <property type="match status" value="1"/>
</dbReference>
<dbReference type="PRINTS" id="PR00449">
    <property type="entry name" value="RASTRNSFRMNG"/>
</dbReference>
<dbReference type="SMART" id="SM00175">
    <property type="entry name" value="RAB"/>
    <property type="match status" value="1"/>
</dbReference>
<dbReference type="SMART" id="SM00176">
    <property type="entry name" value="RAN"/>
    <property type="match status" value="1"/>
</dbReference>
<dbReference type="SMART" id="SM00173">
    <property type="entry name" value="RAS"/>
    <property type="match status" value="1"/>
</dbReference>
<dbReference type="SMART" id="SM00174">
    <property type="entry name" value="RHO"/>
    <property type="match status" value="1"/>
</dbReference>
<dbReference type="SUPFAM" id="SSF52540">
    <property type="entry name" value="P-loop containing nucleoside triphosphate hydrolases"/>
    <property type="match status" value="1"/>
</dbReference>
<dbReference type="PROSITE" id="PS51419">
    <property type="entry name" value="RAB"/>
    <property type="match status" value="1"/>
</dbReference>
<accession>Q1RMR4</accession>
<keyword id="KW-1003">Cell membrane</keyword>
<keyword id="KW-0342">GTP-binding</keyword>
<keyword id="KW-0378">Hydrolase</keyword>
<keyword id="KW-0449">Lipoprotein</keyword>
<keyword id="KW-0460">Magnesium</keyword>
<keyword id="KW-0472">Membrane</keyword>
<keyword id="KW-0479">Metal-binding</keyword>
<keyword id="KW-0488">Methylation</keyword>
<keyword id="KW-0547">Nucleotide-binding</keyword>
<keyword id="KW-0636">Prenylation</keyword>
<keyword id="KW-0653">Protein transport</keyword>
<keyword id="KW-1185">Reference proteome</keyword>
<keyword id="KW-0813">Transport</keyword>
<comment type="function">
    <text evidence="2 4">The small GTPases Rab are key regulators of intracellular membrane trafficking, from the formation of transport vesicles to their fusion with membranes. Rabs cycle between an inactive GDP-bound form and an active GTP-bound form that is able to recruit to membranes different sets of downstream effectors directly responsible for vesicle formation, movement, tethering and fusion (By similarity). RAB15 may act in concert with RAB3A in regulating aspects of synaptic vesicle membrane flow within the nerve terminal (By similarity).</text>
</comment>
<comment type="catalytic activity">
    <reaction evidence="4">
        <text>GTP + H2O = GDP + phosphate + H(+)</text>
        <dbReference type="Rhea" id="RHEA:19669"/>
        <dbReference type="ChEBI" id="CHEBI:15377"/>
        <dbReference type="ChEBI" id="CHEBI:15378"/>
        <dbReference type="ChEBI" id="CHEBI:37565"/>
        <dbReference type="ChEBI" id="CHEBI:43474"/>
        <dbReference type="ChEBI" id="CHEBI:58189"/>
        <dbReference type="EC" id="3.6.5.2"/>
    </reaction>
    <physiologicalReaction direction="left-to-right" evidence="4">
        <dbReference type="Rhea" id="RHEA:19670"/>
    </physiologicalReaction>
</comment>
<comment type="cofactor">
    <cofactor evidence="4">
        <name>Mg(2+)</name>
        <dbReference type="ChEBI" id="CHEBI:18420"/>
    </cofactor>
</comment>
<comment type="activity regulation">
    <text evidence="7">Regulated by guanine nucleotide exchange factors (GEFs) which promote the exchange of bound GDP for free GTP. Regulated by GTPase activating proteins (GAPs) which increase the GTP hydrolysis activity. Inhibited by GDP dissociation inhibitors (GDIs).</text>
</comment>
<comment type="subunit">
    <text evidence="3">The GTP bound form of RAB15 interacts with REP15. Interacts (GTP-bound form) with MICAL1, MICAL3, MICALCL, EHBP1 and EHBP1L1.</text>
</comment>
<comment type="subcellular location">
    <subcellularLocation>
        <location evidence="7">Cell membrane</location>
        <topology evidence="7">Lipid-anchor</topology>
        <orientation evidence="7">Cytoplasmic side</orientation>
    </subcellularLocation>
</comment>
<comment type="domain">
    <text evidence="5">Switch 1, switch 2 and the interswitch regions are characteristic of Rab GTPases and mediate the interactions with Rab downstream effectors. The switch regions undergo conformational changes upon nucleotide binding which drives interaction with specific sets of effector proteins, with most effectors only binding to GTP-bound Rab.</text>
</comment>
<comment type="similarity">
    <text evidence="7">Belongs to the small GTPase superfamily. Rab family.</text>
</comment>